<feature type="chain" id="PRO_0000299302" description="Alkylglycerol monooxygenase">
    <location>
        <begin position="1"/>
        <end position="447"/>
    </location>
</feature>
<feature type="transmembrane region" description="Helical" evidence="2">
    <location>
        <begin position="43"/>
        <end position="63"/>
    </location>
</feature>
<feature type="transmembrane region" description="Helical" evidence="2">
    <location>
        <begin position="111"/>
        <end position="131"/>
    </location>
</feature>
<feature type="transmembrane region" description="Helical" evidence="2">
    <location>
        <begin position="170"/>
        <end position="190"/>
    </location>
</feature>
<feature type="transmembrane region" description="Helical" evidence="2">
    <location>
        <begin position="334"/>
        <end position="354"/>
    </location>
</feature>
<feature type="transmembrane region" description="Helical" evidence="2">
    <location>
        <begin position="363"/>
        <end position="383"/>
    </location>
</feature>
<feature type="transmembrane region" description="Helical" evidence="2">
    <location>
        <begin position="413"/>
        <end position="433"/>
    </location>
</feature>
<feature type="domain" description="Fatty acid hydroxylase" evidence="2">
    <location>
        <begin position="118"/>
        <end position="249"/>
    </location>
</feature>
<feature type="short sequence motif" description="Histidine box-1">
    <location>
        <begin position="132"/>
        <end position="136"/>
    </location>
</feature>
<feature type="short sequence motif" description="Histidine box-2">
    <location>
        <begin position="145"/>
        <end position="149"/>
    </location>
</feature>
<feature type="short sequence motif" description="Histidine box-3">
    <location>
        <begin position="221"/>
        <end position="225"/>
    </location>
</feature>
<proteinExistence type="evidence at transcript level"/>
<organism>
    <name type="scientific">Rattus norvegicus</name>
    <name type="common">Rat</name>
    <dbReference type="NCBI Taxonomy" id="10116"/>
    <lineage>
        <taxon>Eukaryota</taxon>
        <taxon>Metazoa</taxon>
        <taxon>Chordata</taxon>
        <taxon>Craniata</taxon>
        <taxon>Vertebrata</taxon>
        <taxon>Euteleostomi</taxon>
        <taxon>Mammalia</taxon>
        <taxon>Eutheria</taxon>
        <taxon>Euarchontoglires</taxon>
        <taxon>Glires</taxon>
        <taxon>Rodentia</taxon>
        <taxon>Myomorpha</taxon>
        <taxon>Muroidea</taxon>
        <taxon>Muridae</taxon>
        <taxon>Murinae</taxon>
        <taxon>Rattus</taxon>
    </lineage>
</organism>
<keyword id="KW-0256">Endoplasmic reticulum</keyword>
<keyword id="KW-0408">Iron</keyword>
<keyword id="KW-0443">Lipid metabolism</keyword>
<keyword id="KW-0472">Membrane</keyword>
<keyword id="KW-0560">Oxidoreductase</keyword>
<keyword id="KW-1185">Reference proteome</keyword>
<keyword id="KW-0812">Transmembrane</keyword>
<keyword id="KW-1133">Transmembrane helix</keyword>
<comment type="function">
    <text evidence="1">Glyceryl-ether monooxygenase that cleaves the O-alkyl bond of ether lipids. Ether lipids are essential components of brain membranes (By similarity).</text>
</comment>
<comment type="catalytic activity">
    <reaction>
        <text>1-O-(1,2-saturated-alkyl)-sn-glycerol + (6R)-L-erythro-5,6,7,8-tetrahydrobiopterin + O2 = a 1-(1-hydroxyalkyl)-sn-glycerol + (6R)-L-erythro-6,7-dihydrobiopterin + H2O</text>
        <dbReference type="Rhea" id="RHEA:36255"/>
        <dbReference type="ChEBI" id="CHEBI:15377"/>
        <dbReference type="ChEBI" id="CHEBI:15379"/>
        <dbReference type="ChEBI" id="CHEBI:43120"/>
        <dbReference type="ChEBI" id="CHEBI:59560"/>
        <dbReference type="ChEBI" id="CHEBI:73418"/>
        <dbReference type="ChEBI" id="CHEBI:83957"/>
        <dbReference type="EC" id="1.14.16.5"/>
    </reaction>
</comment>
<comment type="cofactor">
    <cofactor evidence="1">
        <name>Fe cation</name>
        <dbReference type="ChEBI" id="CHEBI:24875"/>
    </cofactor>
</comment>
<comment type="subcellular location">
    <subcellularLocation>
        <location evidence="1">Endoplasmic reticulum membrane</location>
        <topology evidence="1">Multi-pass membrane protein</topology>
    </subcellularLocation>
</comment>
<comment type="similarity">
    <text evidence="3">Belongs to the sterol desaturase family. TMEM195 subfamily.</text>
</comment>
<accession>A0JPQ8</accession>
<dbReference type="EC" id="1.14.16.5"/>
<dbReference type="EMBL" id="BC127545">
    <property type="protein sequence ID" value="AAI27546.1"/>
    <property type="molecule type" value="mRNA"/>
</dbReference>
<dbReference type="RefSeq" id="NP_001129371.1">
    <property type="nucleotide sequence ID" value="NM_001135899.1"/>
</dbReference>
<dbReference type="SMR" id="A0JPQ8"/>
<dbReference type="FunCoup" id="A0JPQ8">
    <property type="interactions" value="71"/>
</dbReference>
<dbReference type="STRING" id="10116.ENSRNOP00000029816"/>
<dbReference type="GlyGen" id="A0JPQ8">
    <property type="glycosylation" value="1 site"/>
</dbReference>
<dbReference type="PhosphoSitePlus" id="A0JPQ8"/>
<dbReference type="PaxDb" id="10116-ENSRNOP00000029816"/>
<dbReference type="PeptideAtlas" id="A0JPQ8"/>
<dbReference type="Ensembl" id="ENSRNOT00000032108.6">
    <property type="protein sequence ID" value="ENSRNOP00000029816.4"/>
    <property type="gene ID" value="ENSRNOG00000023116.6"/>
</dbReference>
<dbReference type="GeneID" id="362732"/>
<dbReference type="KEGG" id="rno:362732"/>
<dbReference type="UCSC" id="RGD:1312038">
    <property type="organism name" value="rat"/>
</dbReference>
<dbReference type="AGR" id="RGD:1312038"/>
<dbReference type="CTD" id="392636"/>
<dbReference type="RGD" id="1312038">
    <property type="gene designation" value="Agmo"/>
</dbReference>
<dbReference type="eggNOG" id="KOG0872">
    <property type="taxonomic scope" value="Eukaryota"/>
</dbReference>
<dbReference type="GeneTree" id="ENSGT00440000033807"/>
<dbReference type="HOGENOM" id="CLU_033631_2_1_1"/>
<dbReference type="InParanoid" id="A0JPQ8"/>
<dbReference type="OMA" id="FMPTGWR"/>
<dbReference type="PhylomeDB" id="A0JPQ8"/>
<dbReference type="TreeFam" id="TF314881"/>
<dbReference type="BioCyc" id="MetaCyc:MONOMER-13403"/>
<dbReference type="Reactome" id="R-RNO-75109">
    <property type="pathway name" value="Triglyceride biosynthesis"/>
</dbReference>
<dbReference type="PRO" id="PR:A0JPQ8"/>
<dbReference type="Proteomes" id="UP000002494">
    <property type="component" value="Chromosome 6"/>
</dbReference>
<dbReference type="Bgee" id="ENSRNOG00000023116">
    <property type="expression patterns" value="Expressed in liver and 16 other cell types or tissues"/>
</dbReference>
<dbReference type="GO" id="GO:0005783">
    <property type="term" value="C:endoplasmic reticulum"/>
    <property type="evidence" value="ECO:0000250"/>
    <property type="project" value="UniProtKB"/>
</dbReference>
<dbReference type="GO" id="GO:0005789">
    <property type="term" value="C:endoplasmic reticulum membrane"/>
    <property type="evidence" value="ECO:0000266"/>
    <property type="project" value="RGD"/>
</dbReference>
<dbReference type="GO" id="GO:0050479">
    <property type="term" value="F:glyceryl-ether monooxygenase activity"/>
    <property type="evidence" value="ECO:0000250"/>
    <property type="project" value="UniProtKB"/>
</dbReference>
<dbReference type="GO" id="GO:0005506">
    <property type="term" value="F:iron ion binding"/>
    <property type="evidence" value="ECO:0000250"/>
    <property type="project" value="UniProtKB"/>
</dbReference>
<dbReference type="GO" id="GO:0046485">
    <property type="term" value="P:ether lipid metabolic process"/>
    <property type="evidence" value="ECO:0000250"/>
    <property type="project" value="UniProtKB"/>
</dbReference>
<dbReference type="GO" id="GO:0006643">
    <property type="term" value="P:membrane lipid metabolic process"/>
    <property type="evidence" value="ECO:0000250"/>
    <property type="project" value="UniProtKB"/>
</dbReference>
<dbReference type="GO" id="GO:0019432">
    <property type="term" value="P:triglyceride biosynthetic process"/>
    <property type="evidence" value="ECO:0000266"/>
    <property type="project" value="RGD"/>
</dbReference>
<dbReference type="InterPro" id="IPR056853">
    <property type="entry name" value="AGMP_C"/>
</dbReference>
<dbReference type="InterPro" id="IPR006694">
    <property type="entry name" value="Fatty_acid_hydroxylase"/>
</dbReference>
<dbReference type="InterPro" id="IPR051689">
    <property type="entry name" value="Sterol_desaturase/TMEM195"/>
</dbReference>
<dbReference type="PANTHER" id="PTHR21624:SF1">
    <property type="entry name" value="ALKYLGLYCEROL MONOOXYGENASE"/>
    <property type="match status" value="1"/>
</dbReference>
<dbReference type="PANTHER" id="PTHR21624">
    <property type="entry name" value="STEROL DESATURASE-RELATED PROTEIN"/>
    <property type="match status" value="1"/>
</dbReference>
<dbReference type="Pfam" id="PF24858">
    <property type="entry name" value="AGMP_C"/>
    <property type="match status" value="1"/>
</dbReference>
<dbReference type="Pfam" id="PF04116">
    <property type="entry name" value="FA_hydroxylase"/>
    <property type="match status" value="1"/>
</dbReference>
<protein>
    <recommendedName>
        <fullName>Alkylglycerol monooxygenase</fullName>
        <ecNumber>1.14.16.5</ecNumber>
    </recommendedName>
    <alternativeName>
        <fullName>Transmembrane protein 195</fullName>
    </alternativeName>
</protein>
<name>ALKMO_RAT</name>
<gene>
    <name type="primary">Agmo</name>
    <name type="synonym">Tmem195</name>
</gene>
<reference key="1">
    <citation type="journal article" date="2004" name="Genome Res.">
        <title>The status, quality, and expansion of the NIH full-length cDNA project: the Mammalian Gene Collection (MGC).</title>
        <authorList>
            <consortium name="The MGC Project Team"/>
        </authorList>
    </citation>
    <scope>NUCLEOTIDE SEQUENCE [LARGE SCALE MRNA]</scope>
    <source>
        <tissue>Liver</tissue>
    </source>
</reference>
<evidence type="ECO:0000250" key="1"/>
<evidence type="ECO:0000255" key="2"/>
<evidence type="ECO:0000305" key="3"/>
<sequence length="447" mass="51698">MRNPGAQDNVSVSQGMRAMFYMMKPSETAFQTVEEVPDYVKKATPFFIFLILLELVVSWILKGKPSGRLDDILTSMSAGVVSRLPNLFFRSLEVTSYIYIWENYRVCELPWDSPWTWYLTFLGVDFGYYWFHRMAHEINIIWAAHQAHHSSEDYNLSTALRQSVLQQYSSWVFYCPLALFVPPSVFAVHIQFNLLYQFWIHTEVIRTLGPLELVLNTPSHHRVHHGRNRYCIDKNYAGTLIIWDRIFGTFEAENEQVIYGLTHPIGTFEPFKVQFHHLLYIWTTFWATPGFCHKFSVLFKGPGWGPGKPRLGLSEEIPEVTGQEVPFTSSASQFLKIYAVLQFAVMLVFYEETFANTAVLSQVTILLRICFIILTLTSIGFLLDQRPKAAIVETLRCLLFLTLYRFGHLKPLIESLSFAFEIFFSVCIAFWGVRSITHLASGSWKKP</sequence>